<organism>
    <name type="scientific">Xenopus laevis</name>
    <name type="common">African clawed frog</name>
    <dbReference type="NCBI Taxonomy" id="8355"/>
    <lineage>
        <taxon>Eukaryota</taxon>
        <taxon>Metazoa</taxon>
        <taxon>Chordata</taxon>
        <taxon>Craniata</taxon>
        <taxon>Vertebrata</taxon>
        <taxon>Euteleostomi</taxon>
        <taxon>Amphibia</taxon>
        <taxon>Batrachia</taxon>
        <taxon>Anura</taxon>
        <taxon>Pipoidea</taxon>
        <taxon>Pipidae</taxon>
        <taxon>Xenopodinae</taxon>
        <taxon>Xenopus</taxon>
        <taxon>Xenopus</taxon>
    </lineage>
</organism>
<feature type="chain" id="PRO_0000386621" description="Iroquois-class homeodomain protein irx-3">
    <location>
        <begin position="1"/>
        <end position="448"/>
    </location>
</feature>
<feature type="DNA-binding region" description="Homeobox; TALE-type" evidence="3">
    <location>
        <begin position="108"/>
        <end position="170"/>
    </location>
</feature>
<feature type="region of interest" description="Disordered" evidence="4">
    <location>
        <begin position="171"/>
        <end position="247"/>
    </location>
</feature>
<feature type="compositionally biased region" description="Acidic residues" evidence="4">
    <location>
        <begin position="195"/>
        <end position="222"/>
    </location>
</feature>
<feature type="compositionally biased region" description="Basic and acidic residues" evidence="4">
    <location>
        <begin position="223"/>
        <end position="237"/>
    </location>
</feature>
<feature type="compositionally biased region" description="Acidic residues" evidence="4">
    <location>
        <begin position="238"/>
        <end position="247"/>
    </location>
</feature>
<feature type="sequence conflict" description="In Ref. 1; AAB84027." evidence="12" ref="1">
    <original>N</original>
    <variation>D</variation>
    <location>
        <position position="434"/>
    </location>
</feature>
<proteinExistence type="evidence at transcript level"/>
<reference evidence="12 13" key="1">
    <citation type="journal article" date="1998" name="EMBO J.">
        <title>Xiro3 encodes a Xenopus homolog of the Drosophila Iroquois genes and functions in neural specification.</title>
        <authorList>
            <person name="Bellefroid E.J."/>
            <person name="Kobbe A."/>
            <person name="Gruss P."/>
            <person name="Pieler T."/>
            <person name="Gurdon J.B."/>
            <person name="Papalopulu N."/>
        </authorList>
    </citation>
    <scope>NUCLEOTIDE SEQUENCE [MRNA]</scope>
    <scope>FUNCTION</scope>
    <scope>TISSUE SPECIFICITY</scope>
    <scope>INDUCTION</scope>
    <source>
        <tissue evidence="10">Neurula</tissue>
    </source>
</reference>
<reference evidence="14" key="2">
    <citation type="submission" date="2005-11" db="EMBL/GenBank/DDBJ databases">
        <authorList>
            <consortium name="NIH - Xenopus Gene Collection (XGC) project"/>
        </authorList>
    </citation>
    <scope>NUCLEOTIDE SEQUENCE [LARGE SCALE MRNA]</scope>
    <source>
        <tissue evidence="14">Neurula</tissue>
    </source>
</reference>
<reference evidence="12" key="3">
    <citation type="journal article" date="2002" name="Mech. Dev.">
        <title>Xiro homeoproteins coordinate cell cycle exit and primary neuron formation by upregulating neuronal-fate repressors and downregulating the cell-cycle inhibitor XGadd45-gamma.</title>
        <authorList>
            <person name="de la Calle-Mustienes E."/>
            <person name="Glavic A."/>
            <person name="Modolell J."/>
            <person name="Gomez-Skarmeta J.L."/>
        </authorList>
    </citation>
    <scope>FUNCTION</scope>
</reference>
<reference evidence="12" key="4">
    <citation type="journal article" date="2007" name="Genes Dev.">
        <title>The prepattern transcription factor Irx3 directs nephron segment identity.</title>
        <authorList>
            <person name="Reggiani L."/>
            <person name="Raciti D."/>
            <person name="Airik R."/>
            <person name="Kispert A."/>
            <person name="Braendli A.W."/>
        </authorList>
    </citation>
    <scope>FUNCTION</scope>
    <scope>TISSUE SPECIFICITY</scope>
</reference>
<reference evidence="12" key="5">
    <citation type="journal article" date="2008" name="Development">
        <title>A dual requirement for Iroquois genes during Xenopus kidney development.</title>
        <authorList>
            <person name="Alarcon P."/>
            <person name="Rodriguez-Seguel E."/>
            <person name="Fernandez-Gonzalez A."/>
            <person name="Rubio R."/>
            <person name="Gomez-Skarmeta J.L."/>
        </authorList>
    </citation>
    <scope>FUNCTION</scope>
    <scope>TISSUE SPECIFICITY</scope>
    <scope>INDUCTION</scope>
</reference>
<reference evidence="12" key="6">
    <citation type="journal article" date="2009" name="Dev. Biol.">
        <title>foxD5 plays a critical upstream role in regulating neural ectodermal fate and the onset of neural differentiation.</title>
        <authorList>
            <person name="Yan B."/>
            <person name="Neilson K.M."/>
            <person name="Moody S.A."/>
        </authorList>
    </citation>
    <scope>INDUCTION</scope>
</reference>
<reference evidence="12" key="7">
    <citation type="journal article" date="2009" name="Dev. Biol.">
        <title>The Xenopus Irx genes are essential for neural patterning and define the border between prethalamus and thalamus through mutual antagonism with the anterior repressors Fezf and Arx.</title>
        <authorList>
            <person name="Rodriguez-Seguel E."/>
            <person name="Alarcon P."/>
            <person name="Gomez-Skarmeta J.L."/>
        </authorList>
    </citation>
    <scope>FUNCTION</scope>
    <scope>TISSUE SPECIFICITY</scope>
    <scope>INDUCTION</scope>
</reference>
<keyword id="KW-0010">Activator</keyword>
<keyword id="KW-0217">Developmental protein</keyword>
<keyword id="KW-0221">Differentiation</keyword>
<keyword id="KW-0238">DNA-binding</keyword>
<keyword id="KW-0371">Homeobox</keyword>
<keyword id="KW-0524">Neurogenesis</keyword>
<keyword id="KW-0539">Nucleus</keyword>
<keyword id="KW-1185">Reference proteome</keyword>
<keyword id="KW-0678">Repressor</keyword>
<keyword id="KW-0804">Transcription</keyword>
<keyword id="KW-0805">Transcription regulation</keyword>
<accession>O42261</accession>
<accession>Q32NJ5</accession>
<comment type="function">
    <text evidence="5 6 7 9 10">Acts partially redundantly with other irx members in neural patterning. Required for formation of the posterior forebrain, midbrain, hindbrain, and to a lesser extent, spinal cord. Both up-regulates and down-regulates gene expression during neural development. Acts early in neural plate development to induce proneural gene expression and specify a neural precursor state. Also up-regulates repressors that prevent neuronal differentiation. Required during at least two stages of pronephros kidney development; during neurula stages, maintains transcription of key renal genes to define the size and identity of the pronephric anlage, probably in part through regulation of bmp-signaling. Subsequently required for proper formation of the intermediate tubule segment of the pronephros.</text>
</comment>
<comment type="subcellular location">
    <subcellularLocation>
        <location evidence="2 12">Nucleus</location>
    </subcellularLocation>
</comment>
<comment type="tissue specificity">
    <text evidence="6 7 9 10">Primarily expressed in the developing central nervous system (CNS). At gastrula stage, expressed in both the superficial and deep layers of the presumptive neural plate with expression spreading to the prospective hindbrain, spinal cord and midbrain-hindbrain junction as neurulation proceeds. Not expressed in the anterior neural plate and CNS expression in the tadpole excludes the forebrain. Outside of the CNS, expressed around the closing blastopore at early gastrula stages and as gastrulation proceeds, expression switches to the anterior lateral plate mesoderm. In tadpoles, expressed in the ectodermal layer of the branchial arches, and in the otic vesicle. Also expressed in specific and overlapping dynamic patterns with irx1 and irx2 during pronephric kidney development. Renal expression begins before segment-specific terminal differentiation in the pronephric anlage at mid-neurula stage, and is later found in proximal tubule PT3 as well as intermediate tubule segments IT1 and IT2, with expression in the kidney being maintained through to the tadpole stage.</text>
</comment>
<comment type="induction">
    <text evidence="7 8 9 10">By a combination of a neural inducing signal (nog/noggin) and a posteriorizing signal (bFGF). Inhibited in the neural plate by foxd5. The anterior limit of expression at the future border between the prethalamus and thalamus is defined by mutual repression with the anterior repressor fezf2, and also by arx. Induced by retinoic acid (RA) during kidney development.</text>
</comment>
<comment type="similarity">
    <text evidence="2">Belongs to the TALE/IRO homeobox family.</text>
</comment>
<sequence>MSFPQLGYQYIRPLYPSDRQSVGVTRSGTELSPAGTLSNVLSSVYGAPYAAAAAAQAYGAFLPYSAELPIFPQLGSQYDMKDSPGVQHAAFSHPHPAFYPYGQYQFGDPSRPKNATRESTSTLKAWLNEHRKNPYPTKGEKIMLAIITKMTLTQVSTWFANARRRLKKENKMTWAPRSRTDEEGNAYGSDHEEDKHEDEEEIDLENIDTEDIESKEDLDDPDTDIHSDSKTDTRSDSEVSDGFEDLNVPEDRLLKSVVGQRQLLNEEPQDKCALSSDAKVPQPACEQIKLNRLPPSPPQENNMPVAHKPKIWSLAETATTPDNPRNSPNTGGSVNTQNLIAQHRLIASPGSRFQGWTGRAFSAQQLSLLNSAHFLQGLGVSHTAPCSGNASFPKAAESKCSTNSLTDRPSTVDIEKTIPVLNTAFQPVQRRSQNHLDAAMILSALSSS</sequence>
<name>IRX3_XENLA</name>
<gene>
    <name type="primary">irx3</name>
    <name evidence="11" type="synonym">iro3</name>
</gene>
<evidence type="ECO:0000250" key="1">
    <source>
        <dbReference type="UniProtKB" id="P78415"/>
    </source>
</evidence>
<evidence type="ECO:0000255" key="2"/>
<evidence type="ECO:0000255" key="3">
    <source>
        <dbReference type="PROSITE-ProRule" id="PRU00108"/>
    </source>
</evidence>
<evidence type="ECO:0000256" key="4">
    <source>
        <dbReference type="SAM" id="MobiDB-lite"/>
    </source>
</evidence>
<evidence type="ECO:0000269" key="5">
    <source>
    </source>
</evidence>
<evidence type="ECO:0000269" key="6">
    <source>
    </source>
</evidence>
<evidence type="ECO:0000269" key="7">
    <source>
    </source>
</evidence>
<evidence type="ECO:0000269" key="8">
    <source>
    </source>
</evidence>
<evidence type="ECO:0000269" key="9">
    <source>
    </source>
</evidence>
<evidence type="ECO:0000269" key="10">
    <source>
    </source>
</evidence>
<evidence type="ECO:0000303" key="11">
    <source>
    </source>
</evidence>
<evidence type="ECO:0000305" key="12"/>
<evidence type="ECO:0000312" key="13">
    <source>
        <dbReference type="EMBL" id="AAB84027.1"/>
    </source>
</evidence>
<evidence type="ECO:0000312" key="14">
    <source>
        <dbReference type="EMBL" id="AAI08596.1"/>
    </source>
</evidence>
<protein>
    <recommendedName>
        <fullName>Iroquois-class homeodomain protein irx-3</fullName>
    </recommendedName>
    <alternativeName>
        <fullName evidence="1">Iroquois homeobox protein 3</fullName>
        <shortName evidence="13">Xiro3</shortName>
    </alternativeName>
</protein>
<dbReference type="EMBL" id="AF027175">
    <property type="protein sequence ID" value="AAB84027.1"/>
    <property type="molecule type" value="mRNA"/>
</dbReference>
<dbReference type="EMBL" id="BC108595">
    <property type="protein sequence ID" value="AAI08596.1"/>
    <property type="molecule type" value="mRNA"/>
</dbReference>
<dbReference type="RefSeq" id="NP_001084204.1">
    <property type="nucleotide sequence ID" value="NM_001090735.1"/>
</dbReference>
<dbReference type="SMR" id="O42261"/>
<dbReference type="DNASU" id="399365"/>
<dbReference type="GeneID" id="399365"/>
<dbReference type="KEGG" id="xla:399365"/>
<dbReference type="AGR" id="Xenbase:XB-GENE-480490"/>
<dbReference type="CTD" id="399365"/>
<dbReference type="Xenbase" id="XB-GENE-480490">
    <property type="gene designation" value="irx3.L"/>
</dbReference>
<dbReference type="OMA" id="QPACEQI"/>
<dbReference type="OrthoDB" id="5399138at2759"/>
<dbReference type="Proteomes" id="UP000186698">
    <property type="component" value="Chromosome 4L"/>
</dbReference>
<dbReference type="Bgee" id="399365">
    <property type="expression patterns" value="Expressed in internal ear and 13 other cell types or tissues"/>
</dbReference>
<dbReference type="GO" id="GO:0030424">
    <property type="term" value="C:axon"/>
    <property type="evidence" value="ECO:0000247"/>
    <property type="project" value="AgBase"/>
</dbReference>
<dbReference type="GO" id="GO:0005737">
    <property type="term" value="C:cytoplasm"/>
    <property type="evidence" value="ECO:0000250"/>
    <property type="project" value="UniProtKB"/>
</dbReference>
<dbReference type="GO" id="GO:0005634">
    <property type="term" value="C:nucleus"/>
    <property type="evidence" value="ECO:0000250"/>
    <property type="project" value="UniProtKB"/>
</dbReference>
<dbReference type="GO" id="GO:0000981">
    <property type="term" value="F:DNA-binding transcription factor activity, RNA polymerase II-specific"/>
    <property type="evidence" value="ECO:0000318"/>
    <property type="project" value="GO_Central"/>
</dbReference>
<dbReference type="GO" id="GO:0000978">
    <property type="term" value="F:RNA polymerase II cis-regulatory region sequence-specific DNA binding"/>
    <property type="evidence" value="ECO:0000318"/>
    <property type="project" value="GO_Central"/>
</dbReference>
<dbReference type="GO" id="GO:0007420">
    <property type="term" value="P:brain development"/>
    <property type="evidence" value="ECO:0000315"/>
    <property type="project" value="UniProtKB"/>
</dbReference>
<dbReference type="GO" id="GO:0048468">
    <property type="term" value="P:cell development"/>
    <property type="evidence" value="ECO:0000318"/>
    <property type="project" value="GO_Central"/>
</dbReference>
<dbReference type="GO" id="GO:0009953">
    <property type="term" value="P:dorsal/ventral pattern formation"/>
    <property type="evidence" value="ECO:0000315"/>
    <property type="project" value="UniProtKB"/>
</dbReference>
<dbReference type="GO" id="GO:0001822">
    <property type="term" value="P:kidney development"/>
    <property type="evidence" value="ECO:0000315"/>
    <property type="project" value="MGI"/>
</dbReference>
<dbReference type="GO" id="GO:0072005">
    <property type="term" value="P:maintenance of kidney identity"/>
    <property type="evidence" value="ECO:0000315"/>
    <property type="project" value="UniProtKB"/>
</dbReference>
<dbReference type="GO" id="GO:0007498">
    <property type="term" value="P:mesoderm development"/>
    <property type="evidence" value="ECO:0000247"/>
    <property type="project" value="AgBase"/>
</dbReference>
<dbReference type="GO" id="GO:0001656">
    <property type="term" value="P:metanephros development"/>
    <property type="evidence" value="ECO:0000247"/>
    <property type="project" value="AgBase"/>
</dbReference>
<dbReference type="GO" id="GO:0045665">
    <property type="term" value="P:negative regulation of neuron differentiation"/>
    <property type="evidence" value="ECO:0000315"/>
    <property type="project" value="UniProtKB"/>
</dbReference>
<dbReference type="GO" id="GO:0000122">
    <property type="term" value="P:negative regulation of transcription by RNA polymerase II"/>
    <property type="evidence" value="ECO:0000315"/>
    <property type="project" value="UniProtKB"/>
</dbReference>
<dbReference type="GO" id="GO:0001840">
    <property type="term" value="P:neural plate development"/>
    <property type="evidence" value="ECO:0000315"/>
    <property type="project" value="UniProtKB"/>
</dbReference>
<dbReference type="GO" id="GO:0030182">
    <property type="term" value="P:neuron differentiation"/>
    <property type="evidence" value="ECO:0000318"/>
    <property type="project" value="GO_Central"/>
</dbReference>
<dbReference type="GO" id="GO:0045893">
    <property type="term" value="P:positive regulation of DNA-templated transcription"/>
    <property type="evidence" value="ECO:0000314"/>
    <property type="project" value="UniProtKB"/>
</dbReference>
<dbReference type="GO" id="GO:0045666">
    <property type="term" value="P:positive regulation of neuron differentiation"/>
    <property type="evidence" value="ECO:0000315"/>
    <property type="project" value="UniProtKB"/>
</dbReference>
<dbReference type="GO" id="GO:0045944">
    <property type="term" value="P:positive regulation of transcription by RNA polymerase II"/>
    <property type="evidence" value="ECO:0000314"/>
    <property type="project" value="UniProtKB"/>
</dbReference>
<dbReference type="GO" id="GO:0048793">
    <property type="term" value="P:pronephros development"/>
    <property type="evidence" value="ECO:0000315"/>
    <property type="project" value="UniProtKB"/>
</dbReference>
<dbReference type="GO" id="GO:0009954">
    <property type="term" value="P:proximal/distal pattern formation"/>
    <property type="evidence" value="ECO:0000315"/>
    <property type="project" value="UniProtKB"/>
</dbReference>
<dbReference type="GO" id="GO:0072047">
    <property type="term" value="P:proximal/distal pattern formation involved in nephron development"/>
    <property type="evidence" value="ECO:0000247"/>
    <property type="project" value="AgBase"/>
</dbReference>
<dbReference type="GO" id="GO:0072196">
    <property type="term" value="P:proximal/distal pattern formation involved in pronephric nephron development"/>
    <property type="evidence" value="ECO:0000315"/>
    <property type="project" value="UniProtKB"/>
</dbReference>
<dbReference type="GO" id="GO:0006357">
    <property type="term" value="P:regulation of transcription by RNA polymerase II"/>
    <property type="evidence" value="ECO:0000318"/>
    <property type="project" value="GO_Central"/>
</dbReference>
<dbReference type="GO" id="GO:0072086">
    <property type="term" value="P:specification of loop of Henle identity"/>
    <property type="evidence" value="ECO:0000247"/>
    <property type="project" value="AgBase"/>
</dbReference>
<dbReference type="GO" id="GO:0039005">
    <property type="term" value="P:specification of pronephric tubule identity"/>
    <property type="evidence" value="ECO:0000315"/>
    <property type="project" value="UniProtKB"/>
</dbReference>
<dbReference type="CDD" id="cd00086">
    <property type="entry name" value="homeodomain"/>
    <property type="match status" value="1"/>
</dbReference>
<dbReference type="FunFam" id="1.10.10.60:FF:000003">
    <property type="entry name" value="Iroquois-class homeobox protein IRX"/>
    <property type="match status" value="1"/>
</dbReference>
<dbReference type="Gene3D" id="1.10.10.60">
    <property type="entry name" value="Homeodomain-like"/>
    <property type="match status" value="1"/>
</dbReference>
<dbReference type="InterPro" id="IPR001356">
    <property type="entry name" value="HD"/>
</dbReference>
<dbReference type="InterPro" id="IPR017970">
    <property type="entry name" value="Homeobox_CS"/>
</dbReference>
<dbReference type="InterPro" id="IPR009057">
    <property type="entry name" value="Homeodomain-like_sf"/>
</dbReference>
<dbReference type="InterPro" id="IPR003893">
    <property type="entry name" value="Iroquois_homeo"/>
</dbReference>
<dbReference type="InterPro" id="IPR008422">
    <property type="entry name" value="KN_HD"/>
</dbReference>
<dbReference type="PANTHER" id="PTHR11211">
    <property type="entry name" value="IROQUOIS-CLASS HOMEODOMAIN PROTEIN IRX"/>
    <property type="match status" value="1"/>
</dbReference>
<dbReference type="PANTHER" id="PTHR11211:SF14">
    <property type="entry name" value="IROQUOIS-CLASS HOMEODOMAIN PROTEIN IRX-3"/>
    <property type="match status" value="1"/>
</dbReference>
<dbReference type="Pfam" id="PF05920">
    <property type="entry name" value="Homeobox_KN"/>
    <property type="match status" value="1"/>
</dbReference>
<dbReference type="SMART" id="SM00389">
    <property type="entry name" value="HOX"/>
    <property type="match status" value="1"/>
</dbReference>
<dbReference type="SMART" id="SM00548">
    <property type="entry name" value="IRO"/>
    <property type="match status" value="1"/>
</dbReference>
<dbReference type="SUPFAM" id="SSF46689">
    <property type="entry name" value="Homeodomain-like"/>
    <property type="match status" value="1"/>
</dbReference>
<dbReference type="PROSITE" id="PS00027">
    <property type="entry name" value="HOMEOBOX_1"/>
    <property type="match status" value="1"/>
</dbReference>
<dbReference type="PROSITE" id="PS50071">
    <property type="entry name" value="HOMEOBOX_2"/>
    <property type="match status" value="1"/>
</dbReference>